<dbReference type="EC" id="2.1.2.9" evidence="1"/>
<dbReference type="EMBL" id="AF073952">
    <property type="protein sequence ID" value="AAC26787.1"/>
    <property type="molecule type" value="Genomic_DNA"/>
</dbReference>
<dbReference type="EMBL" id="AE004091">
    <property type="protein sequence ID" value="AAG03408.1"/>
    <property type="molecule type" value="Genomic_DNA"/>
</dbReference>
<dbReference type="PIR" id="G83643">
    <property type="entry name" value="G83643"/>
</dbReference>
<dbReference type="RefSeq" id="NP_248708.1">
    <property type="nucleotide sequence ID" value="NC_002516.2"/>
</dbReference>
<dbReference type="RefSeq" id="WP_003114642.1">
    <property type="nucleotide sequence ID" value="NZ_QZGE01000012.1"/>
</dbReference>
<dbReference type="PDB" id="5UAI">
    <property type="method" value="X-ray"/>
    <property type="resolution" value="2.75 A"/>
    <property type="chains" value="A/B/C/D=1-314"/>
</dbReference>
<dbReference type="PDBsum" id="5UAI"/>
<dbReference type="SMR" id="O85732"/>
<dbReference type="FunCoup" id="O85732">
    <property type="interactions" value="639"/>
</dbReference>
<dbReference type="STRING" id="208964.PA0018"/>
<dbReference type="PaxDb" id="208964-PA0018"/>
<dbReference type="GeneID" id="879258"/>
<dbReference type="KEGG" id="pae:PA0018"/>
<dbReference type="PATRIC" id="fig|208964.12.peg.17"/>
<dbReference type="PseudoCAP" id="PA0018"/>
<dbReference type="HOGENOM" id="CLU_033347_1_2_6"/>
<dbReference type="InParanoid" id="O85732"/>
<dbReference type="OrthoDB" id="9802815at2"/>
<dbReference type="PhylomeDB" id="O85732"/>
<dbReference type="BioCyc" id="PAER208964:G1FZ6-18-MONOMER"/>
<dbReference type="Proteomes" id="UP000002438">
    <property type="component" value="Chromosome"/>
</dbReference>
<dbReference type="GO" id="GO:0005829">
    <property type="term" value="C:cytosol"/>
    <property type="evidence" value="ECO:0000318"/>
    <property type="project" value="GO_Central"/>
</dbReference>
<dbReference type="GO" id="GO:0004479">
    <property type="term" value="F:methionyl-tRNA formyltransferase activity"/>
    <property type="evidence" value="ECO:0000250"/>
    <property type="project" value="PseudoCAP"/>
</dbReference>
<dbReference type="GO" id="GO:0071951">
    <property type="term" value="P:conversion of methionyl-tRNA to N-formyl-methionyl-tRNA"/>
    <property type="evidence" value="ECO:0000318"/>
    <property type="project" value="GO_Central"/>
</dbReference>
<dbReference type="CDD" id="cd08646">
    <property type="entry name" value="FMT_core_Met-tRNA-FMT_N"/>
    <property type="match status" value="1"/>
</dbReference>
<dbReference type="CDD" id="cd08704">
    <property type="entry name" value="Met_tRNA_FMT_C"/>
    <property type="match status" value="1"/>
</dbReference>
<dbReference type="FunFam" id="3.10.25.10:FF:000009">
    <property type="entry name" value="Methionyl-tRNA formyltransferase"/>
    <property type="match status" value="1"/>
</dbReference>
<dbReference type="FunFam" id="3.40.50.12230:FF:000001">
    <property type="entry name" value="Methionyl-tRNA formyltransferase"/>
    <property type="match status" value="1"/>
</dbReference>
<dbReference type="FunFam" id="3.40.50.170:FF:000003">
    <property type="entry name" value="Methionyl-tRNA formyltransferase"/>
    <property type="match status" value="1"/>
</dbReference>
<dbReference type="Gene3D" id="3.10.25.10">
    <property type="entry name" value="Formyl transferase, C-terminal domain"/>
    <property type="match status" value="1"/>
</dbReference>
<dbReference type="Gene3D" id="3.40.50.170">
    <property type="entry name" value="Formyl transferase, N-terminal domain"/>
    <property type="match status" value="1"/>
</dbReference>
<dbReference type="HAMAP" id="MF_00182">
    <property type="entry name" value="Formyl_trans"/>
    <property type="match status" value="1"/>
</dbReference>
<dbReference type="InterPro" id="IPR005794">
    <property type="entry name" value="Fmt"/>
</dbReference>
<dbReference type="InterPro" id="IPR005793">
    <property type="entry name" value="Formyl_trans_C"/>
</dbReference>
<dbReference type="InterPro" id="IPR037022">
    <property type="entry name" value="Formyl_trans_C_sf"/>
</dbReference>
<dbReference type="InterPro" id="IPR002376">
    <property type="entry name" value="Formyl_transf_N"/>
</dbReference>
<dbReference type="InterPro" id="IPR036477">
    <property type="entry name" value="Formyl_transf_N_sf"/>
</dbReference>
<dbReference type="InterPro" id="IPR011034">
    <property type="entry name" value="Formyl_transferase-like_C_sf"/>
</dbReference>
<dbReference type="InterPro" id="IPR001555">
    <property type="entry name" value="GART_AS"/>
</dbReference>
<dbReference type="InterPro" id="IPR044135">
    <property type="entry name" value="Met-tRNA-FMT_C"/>
</dbReference>
<dbReference type="InterPro" id="IPR041711">
    <property type="entry name" value="Met-tRNA-FMT_N"/>
</dbReference>
<dbReference type="NCBIfam" id="TIGR00460">
    <property type="entry name" value="fmt"/>
    <property type="match status" value="1"/>
</dbReference>
<dbReference type="PANTHER" id="PTHR11138">
    <property type="entry name" value="METHIONYL-TRNA FORMYLTRANSFERASE"/>
    <property type="match status" value="1"/>
</dbReference>
<dbReference type="PANTHER" id="PTHR11138:SF5">
    <property type="entry name" value="METHIONYL-TRNA FORMYLTRANSFERASE, MITOCHONDRIAL"/>
    <property type="match status" value="1"/>
</dbReference>
<dbReference type="Pfam" id="PF02911">
    <property type="entry name" value="Formyl_trans_C"/>
    <property type="match status" value="1"/>
</dbReference>
<dbReference type="Pfam" id="PF00551">
    <property type="entry name" value="Formyl_trans_N"/>
    <property type="match status" value="1"/>
</dbReference>
<dbReference type="SUPFAM" id="SSF50486">
    <property type="entry name" value="FMT C-terminal domain-like"/>
    <property type="match status" value="1"/>
</dbReference>
<dbReference type="SUPFAM" id="SSF53328">
    <property type="entry name" value="Formyltransferase"/>
    <property type="match status" value="1"/>
</dbReference>
<dbReference type="PROSITE" id="PS00373">
    <property type="entry name" value="GART"/>
    <property type="match status" value="1"/>
</dbReference>
<sequence length="314" mass="33028">MSQALRIVFAGTPEFAAEHLKALLDTPHRIVAVYTQPDRPAGRGQKLMPSAVKSLALEHGLPVMQPQSLRNAEAQAELAALRADLMVVVAYGLILPQAVLDIPRLGCINSHASLLPRWRGAAPIQRAVEAGDAESGVTVMQMEAGLDTGPMLLKVSTPISAADTGGSLHDRLAALGPKAVIEAIAGLAAGTLHGEIQDDALATYAHKLNKDEARLDWSRPAVELERQVRAFTPWPVCHTSLADAPLKVLGASLGQGSGAPGTILEASRDGLLVACGEGALRLTRLQLPGGKPLAFADLYNSRREQFAAGQVLGQ</sequence>
<keyword id="KW-0002">3D-structure</keyword>
<keyword id="KW-0648">Protein biosynthesis</keyword>
<keyword id="KW-1185">Reference proteome</keyword>
<keyword id="KW-0808">Transferase</keyword>
<name>FMT_PSEAE</name>
<accession>O85732</accession>
<evidence type="ECO:0000255" key="1">
    <source>
        <dbReference type="HAMAP-Rule" id="MF_00182"/>
    </source>
</evidence>
<evidence type="ECO:0000305" key="2"/>
<evidence type="ECO:0007829" key="3">
    <source>
        <dbReference type="PDB" id="5UAI"/>
    </source>
</evidence>
<gene>
    <name evidence="1" type="primary">fmt</name>
    <name type="ordered locus">PA0018</name>
</gene>
<protein>
    <recommendedName>
        <fullName evidence="1">Methionyl-tRNA formyltransferase</fullName>
        <ecNumber evidence="1">2.1.2.9</ecNumber>
    </recommendedName>
</protein>
<proteinExistence type="evidence at protein level"/>
<organism>
    <name type="scientific">Pseudomonas aeruginosa (strain ATCC 15692 / DSM 22644 / CIP 104116 / JCM 14847 / LMG 12228 / 1C / PRS 101 / PAO1)</name>
    <dbReference type="NCBI Taxonomy" id="208964"/>
    <lineage>
        <taxon>Bacteria</taxon>
        <taxon>Pseudomonadati</taxon>
        <taxon>Pseudomonadota</taxon>
        <taxon>Gammaproteobacteria</taxon>
        <taxon>Pseudomonadales</taxon>
        <taxon>Pseudomonadaceae</taxon>
        <taxon>Pseudomonas</taxon>
    </lineage>
</organism>
<feature type="chain" id="PRO_0000083017" description="Methionyl-tRNA formyltransferase">
    <location>
        <begin position="1"/>
        <end position="314"/>
    </location>
</feature>
<feature type="binding site" evidence="1">
    <location>
        <begin position="113"/>
        <end position="116"/>
    </location>
    <ligand>
        <name>(6S)-5,6,7,8-tetrahydrofolate</name>
        <dbReference type="ChEBI" id="CHEBI:57453"/>
    </ligand>
</feature>
<feature type="strand" evidence="3">
    <location>
        <begin position="6"/>
        <end position="11"/>
    </location>
</feature>
<feature type="helix" evidence="3">
    <location>
        <begin position="14"/>
        <end position="24"/>
    </location>
</feature>
<feature type="strand" evidence="3">
    <location>
        <begin position="26"/>
        <end position="34"/>
    </location>
</feature>
<feature type="strand" evidence="3">
    <location>
        <begin position="42"/>
        <end position="45"/>
    </location>
</feature>
<feature type="helix" evidence="3">
    <location>
        <begin position="51"/>
        <end position="58"/>
    </location>
</feature>
<feature type="strand" evidence="3">
    <location>
        <begin position="69"/>
        <end position="71"/>
    </location>
</feature>
<feature type="helix" evidence="3">
    <location>
        <begin position="72"/>
        <end position="79"/>
    </location>
</feature>
<feature type="strand" evidence="3">
    <location>
        <begin position="84"/>
        <end position="90"/>
    </location>
</feature>
<feature type="helix" evidence="3">
    <location>
        <begin position="97"/>
        <end position="100"/>
    </location>
</feature>
<feature type="strand" evidence="3">
    <location>
        <begin position="107"/>
        <end position="113"/>
    </location>
</feature>
<feature type="turn" evidence="3">
    <location>
        <begin position="115"/>
        <end position="118"/>
    </location>
</feature>
<feature type="strand" evidence="3">
    <location>
        <begin position="119"/>
        <end position="121"/>
    </location>
</feature>
<feature type="helix" evidence="3">
    <location>
        <begin position="123"/>
        <end position="129"/>
    </location>
</feature>
<feature type="strand" evidence="3">
    <location>
        <begin position="133"/>
        <end position="141"/>
    </location>
</feature>
<feature type="strand" evidence="3">
    <location>
        <begin position="151"/>
        <end position="158"/>
    </location>
</feature>
<feature type="helix" evidence="3">
    <location>
        <begin position="165"/>
        <end position="188"/>
    </location>
</feature>
<feature type="helix" evidence="3">
    <location>
        <begin position="199"/>
        <end position="201"/>
    </location>
</feature>
<feature type="turn" evidence="3">
    <location>
        <begin position="210"/>
        <end position="213"/>
    </location>
</feature>
<feature type="helix" evidence="3">
    <location>
        <begin position="221"/>
        <end position="230"/>
    </location>
</feature>
<feature type="turn" evidence="3">
    <location>
        <begin position="231"/>
        <end position="235"/>
    </location>
</feature>
<feature type="strand" evidence="3">
    <location>
        <begin position="237"/>
        <end position="241"/>
    </location>
</feature>
<feature type="strand" evidence="3">
    <location>
        <begin position="244"/>
        <end position="254"/>
    </location>
</feature>
<feature type="strand" evidence="3">
    <location>
        <begin position="262"/>
        <end position="267"/>
    </location>
</feature>
<feature type="strand" evidence="3">
    <location>
        <begin position="270"/>
        <end position="274"/>
    </location>
</feature>
<feature type="strand" evidence="3">
    <location>
        <begin position="276"/>
        <end position="286"/>
    </location>
</feature>
<feature type="helix" evidence="3">
    <location>
        <begin position="295"/>
        <end position="299"/>
    </location>
</feature>
<feature type="helix" evidence="3">
    <location>
        <begin position="304"/>
        <end position="306"/>
    </location>
</feature>
<comment type="function">
    <text evidence="1">Attaches a formyl group to the free amino group of methionyl-tRNA(fMet). The formyl group appears to play a dual role in the initiator identity of N-formylmethionyl-tRNA by promoting its recognition by IF2 and preventing the misappropriation of this tRNA by the elongation apparatus.</text>
</comment>
<comment type="catalytic activity">
    <reaction evidence="1">
        <text>L-methionyl-tRNA(fMet) + (6R)-10-formyltetrahydrofolate = N-formyl-L-methionyl-tRNA(fMet) + (6S)-5,6,7,8-tetrahydrofolate + H(+)</text>
        <dbReference type="Rhea" id="RHEA:24380"/>
        <dbReference type="Rhea" id="RHEA-COMP:9952"/>
        <dbReference type="Rhea" id="RHEA-COMP:9953"/>
        <dbReference type="ChEBI" id="CHEBI:15378"/>
        <dbReference type="ChEBI" id="CHEBI:57453"/>
        <dbReference type="ChEBI" id="CHEBI:78530"/>
        <dbReference type="ChEBI" id="CHEBI:78844"/>
        <dbReference type="ChEBI" id="CHEBI:195366"/>
        <dbReference type="EC" id="2.1.2.9"/>
    </reaction>
</comment>
<comment type="similarity">
    <text evidence="1 2">Belongs to the Fmt family.</text>
</comment>
<reference key="1">
    <citation type="journal article" date="1999" name="FEMS Microbiol. Lett.">
        <title>Recognition of the initiator tRNA by the Pseudomonas aeruginosa methionyl-tRNA formyltransferase: importance of the base-base mismatch at the end of the acceptor stem.</title>
        <authorList>
            <person name="Newton D.T."/>
            <person name="Niemkiewicz M."/>
            <person name="Lo R.Y.C."/>
            <person name="Mangroo D."/>
        </authorList>
    </citation>
    <scope>NUCLEOTIDE SEQUENCE [GENOMIC DNA]</scope>
</reference>
<reference key="2">
    <citation type="journal article" date="2000" name="Nature">
        <title>Complete genome sequence of Pseudomonas aeruginosa PAO1, an opportunistic pathogen.</title>
        <authorList>
            <person name="Stover C.K."/>
            <person name="Pham X.-Q.T."/>
            <person name="Erwin A.L."/>
            <person name="Mizoguchi S.D."/>
            <person name="Warrener P."/>
            <person name="Hickey M.J."/>
            <person name="Brinkman F.S.L."/>
            <person name="Hufnagle W.O."/>
            <person name="Kowalik D.J."/>
            <person name="Lagrou M."/>
            <person name="Garber R.L."/>
            <person name="Goltry L."/>
            <person name="Tolentino E."/>
            <person name="Westbrock-Wadman S."/>
            <person name="Yuan Y."/>
            <person name="Brody L.L."/>
            <person name="Coulter S.N."/>
            <person name="Folger K.R."/>
            <person name="Kas A."/>
            <person name="Larbig K."/>
            <person name="Lim R.M."/>
            <person name="Smith K.A."/>
            <person name="Spencer D.H."/>
            <person name="Wong G.K.-S."/>
            <person name="Wu Z."/>
            <person name="Paulsen I.T."/>
            <person name="Reizer J."/>
            <person name="Saier M.H. Jr."/>
            <person name="Hancock R.E.W."/>
            <person name="Lory S."/>
            <person name="Olson M.V."/>
        </authorList>
    </citation>
    <scope>NUCLEOTIDE SEQUENCE [LARGE SCALE GENOMIC DNA]</scope>
    <source>
        <strain>ATCC 15692 / DSM 22644 / CIP 104116 / JCM 14847 / LMG 12228 / 1C / PRS 101 / PAO1</strain>
    </source>
</reference>